<name>SV2B_RAT</name>
<protein>
    <recommendedName>
        <fullName>Synaptic vesicle glycoprotein 2B</fullName>
        <shortName>Synaptic vesicle protein 2B</shortName>
    </recommendedName>
</protein>
<comment type="function">
    <text evidence="1">Probably plays a role in the control of regulated secretion in neural and endocrine cells.</text>
</comment>
<comment type="function">
    <text evidence="10 11 13 16">(Microbial infection) Receptor for C.botulinum neurotoxin type A (BoNT/A, botA); the toxin binds via extracellular loop 4 (PubMed:16543415). Restores uptake of BoNT/A in mouse and rat cells that are deleted for SV2 receptor (PubMed:16543415, PubMed:18815274). Glycosylation of SV2B is not essential for receptor activity, but enhances the interaction (PubMed:18815274, PubMed:19650874). Also serves as a receptor for the closely related C.botulinum neurotoxin type A2; glycosylation is not essential but enhances the interaction (PubMed:29649119).</text>
</comment>
<comment type="function">
    <text evidence="14 15">(Microbial infection) Possible receptor for C.botulinum neurotoxin type D (BoNT/D, botD); BoNT/D does not bind to extracellular loop 4 as do BoNT/A and BoNT/E (PubMed:21483489). Another group does not find a convincing interaction with SV2 (PubMed:21632541).</text>
</comment>
<comment type="function">
    <text evidence="11 13">(Microbial infection) Receptor for C.botulinum neurotoxin type E (BoNT/E); the toxin probably binds via extracellular loop 4 (PubMed:18815274). Restores uptake of BoNT/E in mouse cells that are deleted for SV2 receptor (PubMed:18815274). Glycosylation of SV2B is not essential for receptor activity, but enhances the interaction (PubMed:19650874).</text>
</comment>
<comment type="function">
    <text evidence="13 22">(Microbial infection) Receptor for C.botulinum neurotoxin type F (BoNT/F); binding requires glycosylation of this protein (PubMed:19476346, PubMed:19650874).</text>
</comment>
<comment type="subunit">
    <text evidence="1">Interacts with SYT1 in a calcium-independent manner. Forms a complex with SYT1, syntaxin-1 and SNAP25 (By similarity).</text>
</comment>
<comment type="subunit">
    <text evidence="10 13 14 16">(Microbial infection) Interacts with C.botulinum neurotoxin type A1 and type A2 (BoNT/A, botA) (PubMed:16543415, PubMed:21483489, PubMed:21632541). Interaction is improved by glycosylation of SV2 (PubMed:29649119).</text>
</comment>
<comment type="subunit">
    <text evidence="14">(Microbial infection) Interacts with C.botulinum neurotoxin type D (BoNT/D, botD).</text>
</comment>
<comment type="subunit">
    <text evidence="11 12 13">(Microbial infection) Interacts with C.botulinum neurotoxin type E (BoNT/E) (PubMed:18815274, PubMed:19476346, PubMed:19650874). Interaction requires glycosylation of SV2 proteins (PubMed:19476346).</text>
</comment>
<comment type="subunit">
    <text evidence="13">(Microbial infection) Interacts with C.botulinum neurotoxin type F (BoNT/F) (PubMed:19650874). Interaction requires glycosylation of SV2 proteins (PubMed:19650874).</text>
</comment>
<comment type="subcellular location">
    <subcellularLocation>
        <location evidence="9 17">Cytoplasmic vesicle</location>
        <location evidence="9 17">Secretory vesicle</location>
        <location evidence="9 17">Synaptic vesicle membrane</location>
        <topology evidence="3">Multi-pass membrane protein</topology>
    </subcellularLocation>
    <subcellularLocation>
        <location evidence="8">Cytoplasmic vesicle</location>
        <location evidence="8">Secretory vesicle</location>
        <location evidence="8">Acrosome</location>
    </subcellularLocation>
    <text evidence="8 9">Associated with synaptic-like microvesicles but not with insulin-containing vesicles in insulin-secreting cells of the pancreas (PubMed:16306227). Localizes to microvesicles in the pinealocytes. Localizes to the acrosome in spermatids (PubMed:12754292).</text>
</comment>
<comment type="tissue specificity">
    <text evidence="5 8 17 18">Widely expressed throughout the brain. Specifically expressed by pinealocytes in the pineal gland. Also detected in testis (at protein level). Specifically expressed in neural tissues. Expressed in the spinal cord and in all brain regions with a stronger expression in hippocampus and cortex.</text>
</comment>
<comment type="induction">
    <text evidence="7">By amyloid beta peptide.</text>
</comment>
<comment type="PTM">
    <text evidence="19 23">N-glycosylated.</text>
</comment>
<comment type="PTM">
    <text evidence="6">The N-terminal cytoplasmic domain is phosphorylated by CK1.</text>
</comment>
<comment type="similarity">
    <text evidence="20">Belongs to the major facilitator superfamily.</text>
</comment>
<comment type="caution">
    <text evidence="14 15">The use of this protein as a coreceptor for C.botulinum type D (BoNT/D, botD) is controversial. In double SV2A/SV2B knockout mice BoNT/D does not degrade its synaptobrevin target; introducing SV2A, SV2B or SV2C restores target cleavage (PubMed:21483489). However another group does not find a convincing interaction with SV2 (PubMed:21632541).</text>
</comment>
<dbReference type="EMBL" id="L10362">
    <property type="protein sequence ID" value="AAA42189.1"/>
    <property type="molecule type" value="mRNA"/>
</dbReference>
<dbReference type="EMBL" id="AF372834">
    <property type="protein sequence ID" value="AAL47714.1"/>
    <property type="molecule type" value="mRNA"/>
</dbReference>
<dbReference type="PIR" id="S34961">
    <property type="entry name" value="S34961"/>
</dbReference>
<dbReference type="RefSeq" id="NP_476555.1">
    <property type="nucleotide sequence ID" value="NM_057207.3"/>
</dbReference>
<dbReference type="SMR" id="Q63564"/>
<dbReference type="BioGRID" id="250769">
    <property type="interactions" value="2"/>
</dbReference>
<dbReference type="FunCoup" id="Q63564">
    <property type="interactions" value="1523"/>
</dbReference>
<dbReference type="IntAct" id="Q63564">
    <property type="interactions" value="4"/>
</dbReference>
<dbReference type="MINT" id="Q63564"/>
<dbReference type="GlyCosmos" id="Q63564">
    <property type="glycosylation" value="3 sites, No reported glycans"/>
</dbReference>
<dbReference type="GlyGen" id="Q63564">
    <property type="glycosylation" value="3 sites, 4 N-linked glycans (2 sites), 1 N-linked;o-linked glycan (1 site)"/>
</dbReference>
<dbReference type="iPTMnet" id="Q63564"/>
<dbReference type="PhosphoSitePlus" id="Q63564"/>
<dbReference type="GeneID" id="117556"/>
<dbReference type="KEGG" id="rno:117556"/>
<dbReference type="UCSC" id="RGD:619716">
    <property type="organism name" value="rat"/>
</dbReference>
<dbReference type="AGR" id="RGD:619716"/>
<dbReference type="CTD" id="9899"/>
<dbReference type="RGD" id="619716">
    <property type="gene designation" value="Sv2b"/>
</dbReference>
<dbReference type="InParanoid" id="Q63564"/>
<dbReference type="OrthoDB" id="433512at2759"/>
<dbReference type="PhylomeDB" id="Q63564"/>
<dbReference type="PRO" id="PR:Q63564"/>
<dbReference type="Proteomes" id="UP000002494">
    <property type="component" value="Unplaced"/>
</dbReference>
<dbReference type="GO" id="GO:0001669">
    <property type="term" value="C:acrosomal vesicle"/>
    <property type="evidence" value="ECO:0007669"/>
    <property type="project" value="UniProtKB-SubCell"/>
</dbReference>
<dbReference type="GO" id="GO:0098978">
    <property type="term" value="C:glutamatergic synapse"/>
    <property type="evidence" value="ECO:0000314"/>
    <property type="project" value="SynGO"/>
</dbReference>
<dbReference type="GO" id="GO:0008021">
    <property type="term" value="C:synaptic vesicle"/>
    <property type="evidence" value="ECO:0000314"/>
    <property type="project" value="RGD"/>
</dbReference>
<dbReference type="GO" id="GO:0030672">
    <property type="term" value="C:synaptic vesicle membrane"/>
    <property type="evidence" value="ECO:0000314"/>
    <property type="project" value="SynGO"/>
</dbReference>
<dbReference type="GO" id="GO:0043195">
    <property type="term" value="C:terminal bouton"/>
    <property type="evidence" value="ECO:0007005"/>
    <property type="project" value="ParkinsonsUK-UCL"/>
</dbReference>
<dbReference type="GO" id="GO:0022857">
    <property type="term" value="F:transmembrane transporter activity"/>
    <property type="evidence" value="ECO:0007669"/>
    <property type="project" value="InterPro"/>
</dbReference>
<dbReference type="GO" id="GO:0007268">
    <property type="term" value="P:chemical synaptic transmission"/>
    <property type="evidence" value="ECO:0007669"/>
    <property type="project" value="InterPro"/>
</dbReference>
<dbReference type="GO" id="GO:0001504">
    <property type="term" value="P:neurotransmitter uptake"/>
    <property type="evidence" value="ECO:0000304"/>
    <property type="project" value="RGD"/>
</dbReference>
<dbReference type="GO" id="GO:0099509">
    <property type="term" value="P:regulation of presynaptic cytosolic calcium ion concentration"/>
    <property type="evidence" value="ECO:0000266"/>
    <property type="project" value="RGD"/>
</dbReference>
<dbReference type="GO" id="GO:2000300">
    <property type="term" value="P:regulation of synaptic vesicle exocytosis"/>
    <property type="evidence" value="ECO:0000266"/>
    <property type="project" value="RGD"/>
</dbReference>
<dbReference type="FunFam" id="1.20.1250.20:FF:000009">
    <property type="entry name" value="Synaptic vesicle glycoprotein 2A"/>
    <property type="match status" value="1"/>
</dbReference>
<dbReference type="FunFam" id="2.160.20.80:FF:000001">
    <property type="entry name" value="Synaptic vesicle glycoprotein 2A"/>
    <property type="match status" value="1"/>
</dbReference>
<dbReference type="FunFam" id="1.20.1250.20:FF:000014">
    <property type="entry name" value="synaptic vesicle glycoprotein 2A"/>
    <property type="match status" value="1"/>
</dbReference>
<dbReference type="Gene3D" id="2.160.20.80">
    <property type="entry name" value="E3 ubiquitin-protein ligase SopA"/>
    <property type="match status" value="1"/>
</dbReference>
<dbReference type="Gene3D" id="1.20.1250.20">
    <property type="entry name" value="MFS general substrate transporter like domains"/>
    <property type="match status" value="2"/>
</dbReference>
<dbReference type="InterPro" id="IPR055415">
    <property type="entry name" value="LD_SV2"/>
</dbReference>
<dbReference type="InterPro" id="IPR011701">
    <property type="entry name" value="MFS"/>
</dbReference>
<dbReference type="InterPro" id="IPR020846">
    <property type="entry name" value="MFS_dom"/>
</dbReference>
<dbReference type="InterPro" id="IPR005828">
    <property type="entry name" value="MFS_sugar_transport-like"/>
</dbReference>
<dbReference type="InterPro" id="IPR036259">
    <property type="entry name" value="MFS_trans_sf"/>
</dbReference>
<dbReference type="InterPro" id="IPR005829">
    <property type="entry name" value="Sugar_transporter_CS"/>
</dbReference>
<dbReference type="InterPro" id="IPR022308">
    <property type="entry name" value="SV2"/>
</dbReference>
<dbReference type="NCBIfam" id="TIGR01299">
    <property type="entry name" value="synapt_SV2"/>
    <property type="match status" value="1"/>
</dbReference>
<dbReference type="PANTHER" id="PTHR23511">
    <property type="entry name" value="SYNAPTIC VESICLE GLYCOPROTEIN 2"/>
    <property type="match status" value="1"/>
</dbReference>
<dbReference type="PANTHER" id="PTHR23511:SF2">
    <property type="entry name" value="SYNAPTIC VESICLE GLYCOPROTEIN 2B"/>
    <property type="match status" value="1"/>
</dbReference>
<dbReference type="Pfam" id="PF23894">
    <property type="entry name" value="LD_SV2"/>
    <property type="match status" value="1"/>
</dbReference>
<dbReference type="Pfam" id="PF07690">
    <property type="entry name" value="MFS_1"/>
    <property type="match status" value="1"/>
</dbReference>
<dbReference type="Pfam" id="PF00083">
    <property type="entry name" value="Sugar_tr"/>
    <property type="match status" value="1"/>
</dbReference>
<dbReference type="SUPFAM" id="SSF103473">
    <property type="entry name" value="MFS general substrate transporter"/>
    <property type="match status" value="2"/>
</dbReference>
<dbReference type="SUPFAM" id="SSF141571">
    <property type="entry name" value="Pentapeptide repeat-like"/>
    <property type="match status" value="1"/>
</dbReference>
<dbReference type="PROSITE" id="PS50850">
    <property type="entry name" value="MFS"/>
    <property type="match status" value="1"/>
</dbReference>
<sequence length="683" mass="77502">MDDYRYRDNYEGYAPNDGYYRGNEQNPEEDAQSDVTEGHDEEDEIYEGEYQGIPHPDDVKSKQTKMAPSRADGLRGQADLMAERMEDEEQLAHQYETIIDECGHGRFQWTLFFVLVLALMADGVEVFVVSFALPSAEKDMCLSSSKKGMLGLIVYLGMMAGAFILGGLADKLGRKKVLSMSLAINASFASLSSFVQGYGAFLFCRLISGIGIGGSLPIVFAYFSEFLSREKRGEHLSWLGIFWMTGGIYASAMAWSIIPHYGWGFSMGTNYHFHSWRVFVIVCALPATVSMVALKFMPESPRFLLEMGKHDEAWMILKQVHDTNMRAKGTPEKVFTVSHIKTPKQMDEFIEIQSSTGTWYQRWLVRFMTIFKQVWDNALYCVMGPYRMNTLILAVVWFTMALSYYGLTVWFPDMIRYFQDEEYKSKMKVFFGEHVHGATINFTMENQIHQHGKLVNDKFIKMYFKHVLFEDTFFDKCYFEDVTSTDTYFKNCTIESTTFYNTDLYKHKFIDCRFINSTFLEQKEGCHMDFEEDNDFLIYLVSFLGSLSVLPGNIISALLMDRIGRLKMIGGSMLISAVCCFFLFFGNSESAMIGWQCLFCGTSIAAWNALDVITVELYPTNQRATAFGILNGLCKLGAILGNTIFASFVGITKVVPILLAAASLVGGGLVALRLPETREQVLM</sequence>
<proteinExistence type="evidence at protein level"/>
<organism>
    <name type="scientific">Rattus norvegicus</name>
    <name type="common">Rat</name>
    <dbReference type="NCBI Taxonomy" id="10116"/>
    <lineage>
        <taxon>Eukaryota</taxon>
        <taxon>Metazoa</taxon>
        <taxon>Chordata</taxon>
        <taxon>Craniata</taxon>
        <taxon>Vertebrata</taxon>
        <taxon>Euteleostomi</taxon>
        <taxon>Mammalia</taxon>
        <taxon>Eutheria</taxon>
        <taxon>Euarchontoglires</taxon>
        <taxon>Glires</taxon>
        <taxon>Rodentia</taxon>
        <taxon>Myomorpha</taxon>
        <taxon>Muroidea</taxon>
        <taxon>Muridae</taxon>
        <taxon>Murinae</taxon>
        <taxon>Rattus</taxon>
    </lineage>
</organism>
<gene>
    <name type="primary">Sv2b</name>
    <name type="synonym">Sv2bb</name>
</gene>
<evidence type="ECO:0000250" key="1"/>
<evidence type="ECO:0000250" key="2">
    <source>
        <dbReference type="UniProtKB" id="Q8BG39"/>
    </source>
</evidence>
<evidence type="ECO:0000255" key="3"/>
<evidence type="ECO:0000256" key="4">
    <source>
        <dbReference type="SAM" id="MobiDB-lite"/>
    </source>
</evidence>
<evidence type="ECO:0000269" key="5">
    <source>
    </source>
</evidence>
<evidence type="ECO:0000269" key="6">
    <source>
    </source>
</evidence>
<evidence type="ECO:0000269" key="7">
    <source>
    </source>
</evidence>
<evidence type="ECO:0000269" key="8">
    <source>
    </source>
</evidence>
<evidence type="ECO:0000269" key="9">
    <source>
    </source>
</evidence>
<evidence type="ECO:0000269" key="10">
    <source>
    </source>
</evidence>
<evidence type="ECO:0000269" key="11">
    <source>
    </source>
</evidence>
<evidence type="ECO:0000269" key="12">
    <source>
    </source>
</evidence>
<evidence type="ECO:0000269" key="13">
    <source>
    </source>
</evidence>
<evidence type="ECO:0000269" key="14">
    <source>
    </source>
</evidence>
<evidence type="ECO:0000269" key="15">
    <source>
    </source>
</evidence>
<evidence type="ECO:0000269" key="16">
    <source>
    </source>
</evidence>
<evidence type="ECO:0000269" key="17">
    <source>
    </source>
</evidence>
<evidence type="ECO:0000269" key="18">
    <source>
    </source>
</evidence>
<evidence type="ECO:0000269" key="19">
    <source>
    </source>
</evidence>
<evidence type="ECO:0000305" key="20"/>
<evidence type="ECO:0000305" key="21">
    <source>
    </source>
</evidence>
<evidence type="ECO:0000305" key="22">
    <source>
    </source>
</evidence>
<evidence type="ECO:0000305" key="23">
    <source>
    </source>
</evidence>
<evidence type="ECO:0007744" key="24">
    <source>
    </source>
</evidence>
<accession>Q63564</accession>
<keyword id="KW-0968">Cytoplasmic vesicle</keyword>
<keyword id="KW-0325">Glycoprotein</keyword>
<keyword id="KW-0472">Membrane</keyword>
<keyword id="KW-0532">Neurotransmitter transport</keyword>
<keyword id="KW-0597">Phosphoprotein</keyword>
<keyword id="KW-0675">Receptor</keyword>
<keyword id="KW-1185">Reference proteome</keyword>
<keyword id="KW-0770">Synapse</keyword>
<keyword id="KW-0812">Transmembrane</keyword>
<keyword id="KW-1133">Transmembrane helix</keyword>
<keyword id="KW-0813">Transport</keyword>
<feature type="chain" id="PRO_0000239770" description="Synaptic vesicle glycoprotein 2B">
    <location>
        <begin position="1"/>
        <end position="683"/>
    </location>
</feature>
<feature type="topological domain" description="Cytoplasmic" evidence="3">
    <location>
        <begin position="1"/>
        <end position="110"/>
    </location>
</feature>
<feature type="transmembrane region" description="Helical" evidence="3">
    <location>
        <begin position="111"/>
        <end position="131"/>
    </location>
</feature>
<feature type="topological domain" description="Extracellular" evidence="3">
    <location>
        <begin position="132"/>
        <end position="148"/>
    </location>
</feature>
<feature type="transmembrane region" description="Helical" evidence="3">
    <location>
        <begin position="149"/>
        <end position="169"/>
    </location>
</feature>
<feature type="topological domain" description="Cytoplasmic" evidence="3">
    <location>
        <begin position="170"/>
        <end position="182"/>
    </location>
</feature>
<feature type="transmembrane region" description="Helical" evidence="3">
    <location>
        <begin position="183"/>
        <end position="203"/>
    </location>
</feature>
<feature type="topological domain" description="Extracellular" evidence="3">
    <location>
        <begin position="204"/>
        <end position="205"/>
    </location>
</feature>
<feature type="transmembrane region" description="Helical" evidence="3">
    <location>
        <begin position="206"/>
        <end position="226"/>
    </location>
</feature>
<feature type="topological domain" description="Cytoplasmic" evidence="3">
    <location>
        <begin position="227"/>
        <end position="237"/>
    </location>
</feature>
<feature type="transmembrane region" description="Helical" evidence="3">
    <location>
        <begin position="238"/>
        <end position="258"/>
    </location>
</feature>
<feature type="topological domain" description="Extracellular" evidence="3">
    <location>
        <begin position="259"/>
        <end position="277"/>
    </location>
</feature>
<feature type="transmembrane region" description="Helical" evidence="3">
    <location>
        <begin position="278"/>
        <end position="298"/>
    </location>
</feature>
<feature type="topological domain" description="Cytoplasmic" evidence="3">
    <location>
        <begin position="299"/>
        <end position="390"/>
    </location>
</feature>
<feature type="transmembrane region" description="Helical" evidence="3">
    <location>
        <begin position="391"/>
        <end position="411"/>
    </location>
</feature>
<feature type="topological domain" description="Extracellular" evidence="3 21">
    <location>
        <begin position="412"/>
        <end position="535"/>
    </location>
</feature>
<feature type="transmembrane region" description="Helical" evidence="3">
    <location>
        <begin position="536"/>
        <end position="556"/>
    </location>
</feature>
<feature type="topological domain" description="Cytoplasmic" evidence="3">
    <location>
        <begin position="557"/>
        <end position="565"/>
    </location>
</feature>
<feature type="transmembrane region" description="Helical" evidence="3">
    <location>
        <begin position="566"/>
        <end position="586"/>
    </location>
</feature>
<feature type="topological domain" description="Extracellular" evidence="3">
    <location>
        <begin position="587"/>
        <end position="592"/>
    </location>
</feature>
<feature type="transmembrane region" description="Helical" evidence="3">
    <location>
        <begin position="593"/>
        <end position="613"/>
    </location>
</feature>
<feature type="topological domain" description="Cytoplasmic" evidence="3">
    <location>
        <begin position="614"/>
        <end position="626"/>
    </location>
</feature>
<feature type="transmembrane region" description="Helical" evidence="3">
    <location>
        <begin position="627"/>
        <end position="649"/>
    </location>
</feature>
<feature type="topological domain" description="Extracellular" evidence="3">
    <location>
        <begin position="650"/>
        <end position="653"/>
    </location>
</feature>
<feature type="transmembrane region" description="Helical" evidence="3">
    <location>
        <begin position="654"/>
        <end position="672"/>
    </location>
</feature>
<feature type="topological domain" description="Cytoplasmic" evidence="3">
    <location>
        <begin position="673"/>
        <end position="683"/>
    </location>
</feature>
<feature type="region of interest" description="Disordered" evidence="4">
    <location>
        <begin position="1"/>
        <end position="72"/>
    </location>
</feature>
<feature type="compositionally biased region" description="Basic and acidic residues" evidence="4">
    <location>
        <begin position="1"/>
        <end position="10"/>
    </location>
</feature>
<feature type="modified residue" description="Phosphoserine" evidence="24">
    <location>
        <position position="33"/>
    </location>
</feature>
<feature type="modified residue" description="Phosphothreonine" evidence="24">
    <location>
        <position position="36"/>
    </location>
</feature>
<feature type="modified residue" description="Phosphotyrosine" evidence="2">
    <location>
        <position position="423"/>
    </location>
</feature>
<feature type="glycosylation site" description="N-linked (GlcNAc...) asparagine" evidence="3">
    <location>
        <position position="441"/>
    </location>
</feature>
<feature type="glycosylation site" description="N-linked (GlcNAc...) asparagine" evidence="3">
    <location>
        <position position="491"/>
    </location>
</feature>
<feature type="glycosylation site" description="N-linked (GlcNAc...) asparagine" evidence="3">
    <location>
        <position position="516"/>
    </location>
</feature>
<reference key="1">
    <citation type="journal article" date="1993" name="Proc. Natl. Acad. Sci. U.S.A.">
        <title>Brain contains two forms of synaptic vesicle protein 2.</title>
        <authorList>
            <person name="Bajjalieh S.M."/>
            <person name="Peterson K.E."/>
            <person name="Linial M."/>
            <person name="Scheller R.H."/>
        </authorList>
    </citation>
    <scope>NUCLEOTIDE SEQUENCE [MRNA]</scope>
    <scope>TISSUE SPECIFICITY</scope>
    <scope>SUBCELLULAR LOCATION</scope>
    <source>
        <strain>Sprague-Dawley</strain>
        <tissue>Brain</tissue>
    </source>
</reference>
<reference key="2">
    <citation type="journal article" date="2001" name="Biochem. Biophys. Res. Commun.">
        <title>Identification of a new synaptic vesicle protein 2B mRNA transcript which is up-regulated in neurons by amyloid beta peptide fragment (1-42).</title>
        <authorList>
            <person name="Heese K."/>
            <person name="Nagai Y."/>
            <person name="Sawada T."/>
        </authorList>
    </citation>
    <scope>NUCLEOTIDE SEQUENCE [MRNA]</scope>
    <scope>INDUCTION</scope>
</reference>
<reference key="3">
    <citation type="journal article" date="1998" name="J. Neurochem.">
        <title>Synaptic vesicle protein SV2B, but not SV2A, is predominantly expressed and associated with microvesicles in rat pinealocytes.</title>
        <authorList>
            <person name="Hayashi M."/>
            <person name="Yamamoto A."/>
            <person name="Yatsushiro S."/>
            <person name="Yamada H."/>
            <person name="Futai M."/>
            <person name="Yamaguchi A."/>
            <person name="Moriyama Y."/>
        </authorList>
    </citation>
    <scope>TISSUE SPECIFICITY</scope>
</reference>
<reference key="4">
    <citation type="journal article" date="1998" name="J. Neurosci.">
        <title>SVOP, an evolutionarily conserved synaptic vesicle protein, suggests novel transport functions of synaptic vesicles.</title>
        <authorList>
            <person name="Janz R."/>
            <person name="Hofmann K."/>
            <person name="Suedhof T.C."/>
        </authorList>
    </citation>
    <scope>GLYCOSYLATION</scope>
</reference>
<reference key="5">
    <citation type="journal article" date="1999" name="Neuroscience">
        <title>SV2C is a synaptic vesicle protein with an unusually restricted localization: anatomy of a synaptic vesicle protein family.</title>
        <authorList>
            <person name="Janz R."/>
            <person name="Suedhof T.C."/>
        </authorList>
    </citation>
    <scope>TISSUE SPECIFICITY</scope>
</reference>
<reference key="6">
    <citation type="journal article" date="2000" name="J. Biol. Chem.">
        <title>Phosphorylation of synaptic vesicle protein 2 modulates binding to synaptotagmin.</title>
        <authorList>
            <person name="Pyle R.A."/>
            <person name="Schivell A.E."/>
            <person name="Hidaka H."/>
            <person name="Bajjalieh S.M."/>
        </authorList>
    </citation>
    <scope>PHOSPHORYLATION BY CK1</scope>
</reference>
<reference key="7">
    <citation type="journal article" date="2003" name="J. Histochem. Cytochem.">
        <title>Brain synaptic junctional proteins at the acrosome of rat testicular germ cells.</title>
        <authorList>
            <person name="Redecker P."/>
            <person name="Kreutz M.R."/>
            <person name="Bockmann J."/>
            <person name="Gundelfinger E.D."/>
            <person name="Boeckers T.M."/>
        </authorList>
    </citation>
    <scope>SUBCELLULAR LOCATION</scope>
    <scope>TISSUE SPECIFICITY</scope>
</reference>
<reference key="8">
    <citation type="journal article" date="2005" name="J. Cell Sci.">
        <title>SV2A and SV2C are not vesicular Ca2+ transporters but control glucose-evoked granule recruitment.</title>
        <authorList>
            <person name="Iezzi M."/>
            <person name="Theander S."/>
            <person name="Janz R."/>
            <person name="Loze C."/>
            <person name="Wollheim C.B."/>
        </authorList>
    </citation>
    <scope>SUBCELLULAR LOCATION</scope>
</reference>
<reference key="9">
    <citation type="journal article" date="2005" name="Mol. Cell. Neurosci.">
        <title>SV2A and SV2C contain a unique synaptotagmin-binding site.</title>
        <authorList>
            <person name="Schivell A.E."/>
            <person name="Mochida S."/>
            <person name="Kensel-Hammes P."/>
            <person name="Custer K.L."/>
            <person name="Bajjalieh S.M."/>
        </authorList>
    </citation>
    <scope>INTERACTION WITH SYT1</scope>
</reference>
<reference key="10">
    <citation type="journal article" date="2006" name="Science">
        <title>SV2 is the protein receptor for botulinum neurotoxin A.</title>
        <authorList>
            <person name="Dong M."/>
            <person name="Yeh F."/>
            <person name="Tepp W.H."/>
            <person name="Dean C."/>
            <person name="Johnson E.A."/>
            <person name="Janz R."/>
            <person name="Chapman E.R."/>
        </authorList>
    </citation>
    <scope>FUNCTION AS C.BOTULINUM NEUROTOXIN TYPE A RECEPTOR (MICROBIAL INFECTION)</scope>
    <scope>SUBUNIT (MICROBIAL INFECTION)</scope>
</reference>
<reference key="11">
    <citation type="journal article" date="2008" name="Mol. Biol. Cell">
        <title>Glycosylated SV2A and SV2B mediate the entry of botulinum neurotoxin E into neurons.</title>
        <authorList>
            <person name="Dong M."/>
            <person name="Liu H."/>
            <person name="Tepp W.H."/>
            <person name="Johnson E.A."/>
            <person name="Janz R."/>
            <person name="Chapman E.R."/>
        </authorList>
    </citation>
    <scope>FUNCTION AS C.BOTULINUM NEUROTOXIN TYPES A AND E RECEPTOR (MICROBIAL INFECTION)</scope>
    <scope>SUBUNIT (MICROBIAL INFECTION)</scope>
</reference>
<reference key="12">
    <citation type="journal article" date="2009" name="Biochemistry">
        <title>Glycosylated SV2 and gangliosides as dual receptors for botulinum neurotoxin serotype F.</title>
        <authorList>
            <person name="Fu Z."/>
            <person name="Chen C."/>
            <person name="Barbieri J.T."/>
            <person name="Kim J.J."/>
            <person name="Baldwin M.R."/>
        </authorList>
    </citation>
    <scope>FUNCTION AS C.BOTULINUM NEUROTOXIN TYPE F RECEPTOR (MICROBIAL INFECTION)</scope>
    <scope>SUBUNIT (MICROBIAL INFECTION)</scope>
    <scope>GLYCOSYLATION</scope>
</reference>
<reference key="13">
    <citation type="journal article" date="2009" name="J. Neurochem.">
        <title>Botulinum neurotoxins C, E and F bind gangliosides via a conserved binding site prior to stimulation-dependent uptake with botulinum neurotoxin F utilising the three isoforms of SV2 as second receptor.</title>
        <authorList>
            <person name="Rummel A."/>
            <person name="Haefner K."/>
            <person name="Mahrhold S."/>
            <person name="Darashchonak N."/>
            <person name="Holt M."/>
            <person name="Jahn R."/>
            <person name="Beermann S."/>
            <person name="Karnath T."/>
            <person name="Bigalke H."/>
            <person name="Binz T."/>
        </authorList>
    </citation>
    <scope>FUNCTION AS C.BOTULINUM NEUROTOXIN TYPE A; E AND F RECEPTOR (MICROBIAL INFECTION)</scope>
    <scope>SUBUNIT (MICROBIAL INFECTION)</scope>
</reference>
<reference key="14">
    <citation type="journal article" date="2011" name="PLoS Pathog.">
        <title>Botulinum neurotoxin D uses synaptic vesicle protein SV2 and gangliosides as receptors.</title>
        <authorList>
            <person name="Peng L."/>
            <person name="Tepp W.H."/>
            <person name="Johnson E.A."/>
            <person name="Dong M."/>
        </authorList>
    </citation>
    <scope>POSSIBLE FUNCTION AS C.BOTULINUM NEUROTOXIN TYPE D RECEPTOR (MICROBIAL INFECTION)</scope>
    <scope>SUBUNIT (MICROBIAL INFECTION)</scope>
</reference>
<reference key="15">
    <citation type="journal article" date="2011" name="J. Biol. Chem.">
        <title>Novel ganglioside-mediated entry of botulinum neurotoxin serotype D into neurons.</title>
        <authorList>
            <person name="Kroken A.R."/>
            <person name="Karalewitz A.P."/>
            <person name="Fu Z."/>
            <person name="Kim J.J."/>
            <person name="Barbieri J.T."/>
        </authorList>
    </citation>
    <scope>NOT RECEPTOR FOR C.BOTULINUM NEUROTOXIN TYPE D (MICROBIAL INFECTION)</scope>
    <scope>SUBUNIT (MICROBIAL INFECTION)</scope>
</reference>
<reference key="16">
    <citation type="journal article" date="2012" name="Nat. Commun.">
        <title>Quantitative maps of protein phosphorylation sites across 14 different rat organs and tissues.</title>
        <authorList>
            <person name="Lundby A."/>
            <person name="Secher A."/>
            <person name="Lage K."/>
            <person name="Nordsborg N.B."/>
            <person name="Dmytriyev A."/>
            <person name="Lundby C."/>
            <person name="Olsen J.V."/>
        </authorList>
    </citation>
    <scope>PHOSPHORYLATION [LARGE SCALE ANALYSIS] AT SER-33 AND THR-36</scope>
    <scope>IDENTIFICATION BY MASS SPECTROMETRY [LARGE SCALE ANALYSIS]</scope>
</reference>
<reference key="17">
    <citation type="journal article" date="2018" name="Toxins">
        <title>Crystal structure of botulinum neurotoxin A2 in complex with the human protein receptor SV2C reveals plasticity in receptor binding.</title>
        <authorList>
            <person name="Gustafsson R."/>
            <person name="Zhang S."/>
            <person name="Masuyer G."/>
            <person name="Dong M."/>
            <person name="Stenmark P."/>
        </authorList>
    </citation>
    <scope>FUNCTION AS C.BOTULINUM NEUROTOXIN TYPE A2 RECEPTOR (MICROBIAL INFECTION)</scope>
    <scope>SUBUNIT (MICROBIAL INFECTION)</scope>
    <scope>GLYCOSYLATION</scope>
</reference>